<dbReference type="EMBL" id="AF492675">
    <property type="protein sequence ID" value="AAM46827.1"/>
    <property type="molecule type" value="mRNA"/>
</dbReference>
<dbReference type="EMBL" id="AF492676">
    <property type="protein sequence ID" value="AAM46828.1"/>
    <property type="molecule type" value="mRNA"/>
</dbReference>
<dbReference type="EMBL" id="AF492677">
    <property type="protein sequence ID" value="AAM46829.1"/>
    <property type="molecule type" value="mRNA"/>
</dbReference>
<dbReference type="EMBL" id="AF492678">
    <property type="protein sequence ID" value="AAM46830.1"/>
    <property type="molecule type" value="mRNA"/>
</dbReference>
<dbReference type="EMBL" id="AF492679">
    <property type="protein sequence ID" value="AAM46831.1"/>
    <property type="molecule type" value="mRNA"/>
</dbReference>
<dbReference type="EMBL" id="AF492680">
    <property type="protein sequence ID" value="AAM46832.1"/>
    <property type="molecule type" value="mRNA"/>
</dbReference>
<dbReference type="EMBL" id="AF492681">
    <property type="protein sequence ID" value="AAM46833.1"/>
    <property type="molecule type" value="mRNA"/>
</dbReference>
<dbReference type="EMBL" id="AB059408">
    <property type="protein sequence ID" value="BAB40926.1"/>
    <property type="molecule type" value="mRNA"/>
</dbReference>
<dbReference type="EMBL" id="AB059409">
    <property type="protein sequence ID" value="BAB40927.1"/>
    <property type="molecule type" value="mRNA"/>
</dbReference>
<dbReference type="EMBL" id="AB059410">
    <property type="protein sequence ID" value="BAB40928.1"/>
    <property type="molecule type" value="mRNA"/>
</dbReference>
<dbReference type="EMBL" id="AF454763">
    <property type="protein sequence ID" value="AAL56613.1"/>
    <property type="molecule type" value="mRNA"/>
</dbReference>
<dbReference type="EMBL" id="AK289707">
    <property type="protein sequence ID" value="BAF82396.1"/>
    <property type="molecule type" value="mRNA"/>
</dbReference>
<dbReference type="EMBL" id="AC108215">
    <property type="status" value="NOT_ANNOTATED_CDS"/>
    <property type="molecule type" value="Genomic_DNA"/>
</dbReference>
<dbReference type="EMBL" id="BC014225">
    <property type="protein sequence ID" value="AAH14225.1"/>
    <property type="molecule type" value="mRNA"/>
</dbReference>
<dbReference type="CCDS" id="CCDS3507.1">
    <molecule id="Q9BPY8-1"/>
</dbReference>
<dbReference type="CCDS" id="CCDS47062.1">
    <molecule id="Q9BPY8-3"/>
</dbReference>
<dbReference type="CCDS" id="CCDS54767.1">
    <molecule id="Q9BPY8-4"/>
</dbReference>
<dbReference type="RefSeq" id="NP_001138931.1">
    <molecule id="Q9BPY8-1"/>
    <property type="nucleotide sequence ID" value="NM_001145459.2"/>
</dbReference>
<dbReference type="RefSeq" id="NP_001138932.1">
    <molecule id="Q9BPY8-4"/>
    <property type="nucleotide sequence ID" value="NM_001145460.2"/>
</dbReference>
<dbReference type="RefSeq" id="NP_115884.4">
    <molecule id="Q9BPY8-3"/>
    <property type="nucleotide sequence ID" value="NM_032495.5"/>
</dbReference>
<dbReference type="RefSeq" id="NP_631957.1">
    <molecule id="Q9BPY8-1"/>
    <property type="nucleotide sequence ID" value="NM_139211.5"/>
</dbReference>
<dbReference type="RefSeq" id="NP_631958.1">
    <molecule id="Q9BPY8-1"/>
    <property type="nucleotide sequence ID" value="NM_139212.4"/>
</dbReference>
<dbReference type="RefSeq" id="XP_016864218.1">
    <property type="nucleotide sequence ID" value="XM_017008729.1"/>
</dbReference>
<dbReference type="RefSeq" id="XP_016864219.1">
    <molecule id="Q9BPY8-1"/>
    <property type="nucleotide sequence ID" value="XM_017008730.3"/>
</dbReference>
<dbReference type="RefSeq" id="XP_016864220.1">
    <molecule id="Q9BPY8-1"/>
    <property type="nucleotide sequence ID" value="XM_017008731.3"/>
</dbReference>
<dbReference type="RefSeq" id="XP_016864221.1">
    <molecule id="Q9BPY8-1"/>
    <property type="nucleotide sequence ID" value="XM_017008732.2"/>
</dbReference>
<dbReference type="RefSeq" id="XP_016864222.1">
    <property type="nucleotide sequence ID" value="XM_017008733.1"/>
</dbReference>
<dbReference type="RefSeq" id="XP_016864223.1">
    <molecule id="Q9BPY8-1"/>
    <property type="nucleotide sequence ID" value="XM_017008734.2"/>
</dbReference>
<dbReference type="RefSeq" id="XP_047272275.1">
    <molecule id="Q9BPY8-3"/>
    <property type="nucleotide sequence ID" value="XM_047416319.1"/>
</dbReference>
<dbReference type="RefSeq" id="XP_047272276.1">
    <molecule id="Q9BPY8-3"/>
    <property type="nucleotide sequence ID" value="XM_047416320.1"/>
</dbReference>
<dbReference type="RefSeq" id="XP_047272277.1">
    <molecule id="Q9BPY8-3"/>
    <property type="nucleotide sequence ID" value="XM_047416321.1"/>
</dbReference>
<dbReference type="RefSeq" id="XP_047272278.1">
    <molecule id="Q9BPY8-1"/>
    <property type="nucleotide sequence ID" value="XM_047416322.1"/>
</dbReference>
<dbReference type="RefSeq" id="XP_054207068.1">
    <molecule id="Q9BPY8-3"/>
    <property type="nucleotide sequence ID" value="XM_054351093.1"/>
</dbReference>
<dbReference type="RefSeq" id="XP_054207069.1">
    <molecule id="Q9BPY8-3"/>
    <property type="nucleotide sequence ID" value="XM_054351094.1"/>
</dbReference>
<dbReference type="RefSeq" id="XP_054207070.1">
    <molecule id="Q9BPY8-3"/>
    <property type="nucleotide sequence ID" value="XM_054351095.1"/>
</dbReference>
<dbReference type="RefSeq" id="XP_054207071.1">
    <molecule id="Q9BPY8-1"/>
    <property type="nucleotide sequence ID" value="XM_054351096.1"/>
</dbReference>
<dbReference type="RefSeq" id="XP_054207072.1">
    <molecule id="Q9BPY8-1"/>
    <property type="nucleotide sequence ID" value="XM_054351097.1"/>
</dbReference>
<dbReference type="RefSeq" id="XP_054207073.1">
    <molecule id="Q9BPY8-1"/>
    <property type="nucleotide sequence ID" value="XM_054351098.1"/>
</dbReference>
<dbReference type="RefSeq" id="XP_054207074.1">
    <molecule id="Q9BPY8-1"/>
    <property type="nucleotide sequence ID" value="XM_054351099.1"/>
</dbReference>
<dbReference type="RefSeq" id="XP_054207075.1">
    <molecule id="Q9BPY8-1"/>
    <property type="nucleotide sequence ID" value="XM_054351100.1"/>
</dbReference>
<dbReference type="SMR" id="Q9BPY8"/>
<dbReference type="BioGRID" id="124117">
    <property type="interactions" value="34"/>
</dbReference>
<dbReference type="FunCoup" id="Q9BPY8">
    <property type="interactions" value="1074"/>
</dbReference>
<dbReference type="IntAct" id="Q9BPY8">
    <property type="interactions" value="7"/>
</dbReference>
<dbReference type="MINT" id="Q9BPY8"/>
<dbReference type="STRING" id="9606.ENSP00000450527"/>
<dbReference type="GlyGen" id="Q9BPY8">
    <property type="glycosylation" value="1 site"/>
</dbReference>
<dbReference type="iPTMnet" id="Q9BPY8"/>
<dbReference type="PhosphoSitePlus" id="Q9BPY8"/>
<dbReference type="BioMuta" id="HOPX"/>
<dbReference type="DMDM" id="60392394"/>
<dbReference type="jPOST" id="Q9BPY8"/>
<dbReference type="MassIVE" id="Q9BPY8"/>
<dbReference type="PaxDb" id="9606-ENSP00000450527"/>
<dbReference type="PeptideAtlas" id="Q9BPY8"/>
<dbReference type="ProteomicsDB" id="19147"/>
<dbReference type="ProteomicsDB" id="32566"/>
<dbReference type="ProteomicsDB" id="78595">
    <molecule id="Q9BPY8-1"/>
</dbReference>
<dbReference type="ProteomicsDB" id="78596">
    <molecule id="Q9BPY8-2"/>
</dbReference>
<dbReference type="Antibodypedia" id="24043">
    <property type="antibodies" value="266 antibodies from 30 providers"/>
</dbReference>
<dbReference type="DNASU" id="84525"/>
<dbReference type="Ensembl" id="ENST00000317745.11">
    <molecule id="Q9BPY8-1"/>
    <property type="protein sequence ID" value="ENSP00000315198.7"/>
    <property type="gene ID" value="ENSG00000171476.23"/>
</dbReference>
<dbReference type="Ensembl" id="ENST00000337881.12">
    <molecule id="Q9BPY8-1"/>
    <property type="protein sequence ID" value="ENSP00000337330.7"/>
    <property type="gene ID" value="ENSG00000171476.23"/>
</dbReference>
<dbReference type="Ensembl" id="ENST00000381255.7">
    <molecule id="Q9BPY8-1"/>
    <property type="protein sequence ID" value="ENSP00000370654.3"/>
    <property type="gene ID" value="ENSG00000171476.23"/>
</dbReference>
<dbReference type="Ensembl" id="ENST00000381260.7">
    <molecule id="Q9BPY8-2"/>
    <property type="protein sequence ID" value="ENSP00000370659.2"/>
    <property type="gene ID" value="ENSG00000171476.23"/>
</dbReference>
<dbReference type="Ensembl" id="ENST00000420433.6">
    <molecule id="Q9BPY8-3"/>
    <property type="protein sequence ID" value="ENSP00000396275.1"/>
    <property type="gene ID" value="ENSG00000171476.23"/>
</dbReference>
<dbReference type="Ensembl" id="ENST00000503639.7">
    <molecule id="Q9BPY8-1"/>
    <property type="protein sequence ID" value="ENSP00000424101.2"/>
    <property type="gene ID" value="ENSG00000171476.23"/>
</dbReference>
<dbReference type="Ensembl" id="ENST00000508121.2">
    <molecule id="Q9BPY8-1"/>
    <property type="protein sequence ID" value="ENSP00000422175.2"/>
    <property type="gene ID" value="ENSG00000171476.23"/>
</dbReference>
<dbReference type="Ensembl" id="ENST00000553379.6">
    <molecule id="Q9BPY8-1"/>
    <property type="protein sequence ID" value="ENSP00000452340.1"/>
    <property type="gene ID" value="ENSG00000171476.23"/>
</dbReference>
<dbReference type="Ensembl" id="ENST00000554144.5">
    <molecule id="Q9BPY8-4"/>
    <property type="protein sequence ID" value="ENSP00000450527.1"/>
    <property type="gene ID" value="ENSG00000171476.23"/>
</dbReference>
<dbReference type="Ensembl" id="ENST00000555760.6">
    <molecule id="Q9BPY8-1"/>
    <property type="protein sequence ID" value="ENSP00000452098.1"/>
    <property type="gene ID" value="ENSG00000171476.23"/>
</dbReference>
<dbReference type="Ensembl" id="ENST00000556376.6">
    <molecule id="Q9BPY8-1"/>
    <property type="protein sequence ID" value="ENSP00000451794.1"/>
    <property type="gene ID" value="ENSG00000171476.23"/>
</dbReference>
<dbReference type="Ensembl" id="ENST00000556614.6">
    <molecule id="Q9BPY8-1"/>
    <property type="protein sequence ID" value="ENSP00000452003.1"/>
    <property type="gene ID" value="ENSG00000171476.23"/>
</dbReference>
<dbReference type="GeneID" id="84525"/>
<dbReference type="KEGG" id="hsa:84525"/>
<dbReference type="MANE-Select" id="ENST00000420433.6">
    <molecule id="Q9BPY8-3"/>
    <property type="protein sequence ID" value="ENSP00000396275.1"/>
    <property type="RefSeq nucleotide sequence ID" value="NM_032495.6"/>
    <property type="RefSeq protein sequence ID" value="NP_115884.4"/>
</dbReference>
<dbReference type="UCSC" id="uc003hbz.3">
    <molecule id="Q9BPY8-1"/>
    <property type="organism name" value="human"/>
</dbReference>
<dbReference type="AGR" id="HGNC:24961"/>
<dbReference type="CTD" id="84525"/>
<dbReference type="DisGeNET" id="84525"/>
<dbReference type="GeneCards" id="HOPX"/>
<dbReference type="HGNC" id="HGNC:24961">
    <property type="gene designation" value="HOPX"/>
</dbReference>
<dbReference type="HPA" id="ENSG00000171476">
    <property type="expression patterns" value="Tissue enhanced (esophagus, skin)"/>
</dbReference>
<dbReference type="MIM" id="607275">
    <property type="type" value="gene"/>
</dbReference>
<dbReference type="neXtProt" id="NX_Q9BPY8"/>
<dbReference type="OpenTargets" id="ENSG00000171476"/>
<dbReference type="PharmGKB" id="PA162391564"/>
<dbReference type="VEuPathDB" id="HostDB:ENSG00000171476"/>
<dbReference type="eggNOG" id="KOG0490">
    <property type="taxonomic scope" value="Eukaryota"/>
</dbReference>
<dbReference type="GeneTree" id="ENSGT00390000017143"/>
<dbReference type="HOGENOM" id="CLU_193231_0_0_1"/>
<dbReference type="InParanoid" id="Q9BPY8"/>
<dbReference type="OMA" id="LRMAKWR"/>
<dbReference type="OrthoDB" id="6159439at2759"/>
<dbReference type="PAN-GO" id="Q9BPY8">
    <property type="GO annotations" value="2 GO annotations based on evolutionary models"/>
</dbReference>
<dbReference type="PhylomeDB" id="Q9BPY8"/>
<dbReference type="PathwayCommons" id="Q9BPY8"/>
<dbReference type="Reactome" id="R-HSA-9725554">
    <property type="pathway name" value="Differentiation of Keratinocytes in Interfollicular Epidermis in Mammalian Skin"/>
</dbReference>
<dbReference type="SignaLink" id="Q9BPY8"/>
<dbReference type="SIGNOR" id="Q9BPY8"/>
<dbReference type="BioGRID-ORCS" id="84525">
    <property type="hits" value="10 hits in 1166 CRISPR screens"/>
</dbReference>
<dbReference type="CD-CODE" id="DEE660B4">
    <property type="entry name" value="Stress granule"/>
</dbReference>
<dbReference type="ChiTaRS" id="HOPX">
    <property type="organism name" value="human"/>
</dbReference>
<dbReference type="GeneWiki" id="HOPX"/>
<dbReference type="GenomeRNAi" id="84525"/>
<dbReference type="Pharos" id="Q9BPY8">
    <property type="development level" value="Tbio"/>
</dbReference>
<dbReference type="PRO" id="PR:Q9BPY8"/>
<dbReference type="Proteomes" id="UP000005640">
    <property type="component" value="Chromosome 4"/>
</dbReference>
<dbReference type="RNAct" id="Q9BPY8">
    <property type="molecule type" value="protein"/>
</dbReference>
<dbReference type="Bgee" id="ENSG00000171476">
    <property type="expression patterns" value="Expressed in upper leg skin and 197 other cell types or tissues"/>
</dbReference>
<dbReference type="GO" id="GO:0000785">
    <property type="term" value="C:chromatin"/>
    <property type="evidence" value="ECO:0000247"/>
    <property type="project" value="NTNU_SB"/>
</dbReference>
<dbReference type="GO" id="GO:0005737">
    <property type="term" value="C:cytoplasm"/>
    <property type="evidence" value="ECO:0007669"/>
    <property type="project" value="UniProtKB-SubCell"/>
</dbReference>
<dbReference type="GO" id="GO:0005634">
    <property type="term" value="C:nucleus"/>
    <property type="evidence" value="ECO:0000314"/>
    <property type="project" value="MGI"/>
</dbReference>
<dbReference type="GO" id="GO:0003677">
    <property type="term" value="F:DNA binding"/>
    <property type="evidence" value="ECO:0007669"/>
    <property type="project" value="UniProtKB-KW"/>
</dbReference>
<dbReference type="GO" id="GO:0035033">
    <property type="term" value="F:histone deacetylase regulator activity"/>
    <property type="evidence" value="ECO:0007669"/>
    <property type="project" value="Ensembl"/>
</dbReference>
<dbReference type="GO" id="GO:0003166">
    <property type="term" value="P:bundle of His development"/>
    <property type="evidence" value="ECO:0000303"/>
    <property type="project" value="BHF-UCL"/>
</dbReference>
<dbReference type="GO" id="GO:0051131">
    <property type="term" value="P:chaperone-mediated protein complex assembly"/>
    <property type="evidence" value="ECO:0000314"/>
    <property type="project" value="CAFA"/>
</dbReference>
<dbReference type="GO" id="GO:0048286">
    <property type="term" value="P:lung alveolus development"/>
    <property type="evidence" value="ECO:0007669"/>
    <property type="project" value="Ensembl"/>
</dbReference>
<dbReference type="GO" id="GO:0045596">
    <property type="term" value="P:negative regulation of cell differentiation"/>
    <property type="evidence" value="ECO:0000314"/>
    <property type="project" value="MGI"/>
</dbReference>
<dbReference type="GO" id="GO:0000122">
    <property type="term" value="P:negative regulation of transcription by RNA polymerase II"/>
    <property type="evidence" value="ECO:0007669"/>
    <property type="project" value="Ensembl"/>
</dbReference>
<dbReference type="GO" id="GO:1903598">
    <property type="term" value="P:positive regulation of gap junction assembly"/>
    <property type="evidence" value="ECO:0007669"/>
    <property type="project" value="Ensembl"/>
</dbReference>
<dbReference type="GO" id="GO:0043415">
    <property type="term" value="P:positive regulation of skeletal muscle tissue regeneration"/>
    <property type="evidence" value="ECO:0007669"/>
    <property type="project" value="Ensembl"/>
</dbReference>
<dbReference type="GO" id="GO:0051155">
    <property type="term" value="P:positive regulation of striated muscle cell differentiation"/>
    <property type="evidence" value="ECO:0007669"/>
    <property type="project" value="Ensembl"/>
</dbReference>
<dbReference type="GO" id="GO:0008016">
    <property type="term" value="P:regulation of heart contraction"/>
    <property type="evidence" value="ECO:0007669"/>
    <property type="project" value="Ensembl"/>
</dbReference>
<dbReference type="GO" id="GO:0006357">
    <property type="term" value="P:regulation of transcription by RNA polymerase II"/>
    <property type="evidence" value="ECO:0000318"/>
    <property type="project" value="GO_Central"/>
</dbReference>
<dbReference type="GO" id="GO:0001829">
    <property type="term" value="P:trophectodermal cell differentiation"/>
    <property type="evidence" value="ECO:0000314"/>
    <property type="project" value="MGI"/>
</dbReference>
<dbReference type="CDD" id="cd00086">
    <property type="entry name" value="homeodomain"/>
    <property type="match status" value="1"/>
</dbReference>
<dbReference type="FunFam" id="1.10.10.60:FF:000213">
    <property type="entry name" value="Homeodomain-only protein"/>
    <property type="match status" value="1"/>
</dbReference>
<dbReference type="Gene3D" id="1.10.10.60">
    <property type="entry name" value="Homeodomain-like"/>
    <property type="match status" value="1"/>
</dbReference>
<dbReference type="InterPro" id="IPR001356">
    <property type="entry name" value="HD"/>
</dbReference>
<dbReference type="InterPro" id="IPR009057">
    <property type="entry name" value="Homeodomain-like_sf"/>
</dbReference>
<dbReference type="InterPro" id="IPR039162">
    <property type="entry name" value="HOPX"/>
</dbReference>
<dbReference type="PANTHER" id="PTHR21408">
    <property type="entry name" value="HOMEODOMAIN-ONLY PROTEIN"/>
    <property type="match status" value="1"/>
</dbReference>
<dbReference type="PANTHER" id="PTHR21408:SF1">
    <property type="entry name" value="HOMEODOMAIN-ONLY PROTEIN"/>
    <property type="match status" value="1"/>
</dbReference>
<dbReference type="Pfam" id="PF00046">
    <property type="entry name" value="Homeodomain"/>
    <property type="match status" value="1"/>
</dbReference>
<dbReference type="SMART" id="SM00389">
    <property type="entry name" value="HOX"/>
    <property type="match status" value="1"/>
</dbReference>
<dbReference type="SUPFAM" id="SSF46689">
    <property type="entry name" value="Homeodomain-like"/>
    <property type="match status" value="1"/>
</dbReference>
<dbReference type="PROSITE" id="PS50071">
    <property type="entry name" value="HOMEOBOX_2"/>
    <property type="match status" value="1"/>
</dbReference>
<gene>
    <name type="primary">HOPX</name>
    <name type="synonym">HOD</name>
    <name type="synonym">HOP</name>
    <name type="synonym">LAGY</name>
    <name type="synonym">NECC1</name>
    <name type="synonym">OB1</name>
</gene>
<proteinExistence type="evidence at protein level"/>
<reference key="1">
    <citation type="journal article" date="2002" name="Mech. Dev.">
        <title>Expression of mOb1, a novel atypical 73 amino acid K50-homeodomain protein, during mouse development.</title>
        <authorList>
            <person name="Adu J."/>
            <person name="Leong F.T."/>
            <person name="Smith N.R."/>
            <person name="Leek J.P."/>
            <person name="Markham A.F."/>
            <person name="Robinson P.A."/>
            <person name="Mighell A.J."/>
        </authorList>
    </citation>
    <scope>NUCLEOTIDE SEQUENCE [MRNA] (ISOFORMS 1 AND 2)</scope>
    <source>
        <tissue>Heart</tissue>
    </source>
</reference>
<reference key="2">
    <citation type="journal article" date="2003" name="Genomics">
        <title>NECC1, a candidate choriocarcinoma suppressor gene that encodes a homeodomain consensus motif.</title>
        <authorList>
            <person name="Asanoma K."/>
            <person name="Matsuda T."/>
            <person name="Kondo H."/>
            <person name="Kato K."/>
            <person name="Kishino T."/>
            <person name="Niikawa N."/>
            <person name="Wake N."/>
            <person name="Kato H."/>
        </authorList>
    </citation>
    <scope>NUCLEOTIDE SEQUENCE [MRNA] (ISOFORM 1)</scope>
    <scope>TISSUE SPECIFICITY</scope>
    <scope>POSSIBLE INVOLVEMENT IN CHORIOCARCINOMA</scope>
</reference>
<reference key="3">
    <citation type="journal article" date="2003" name="Oncology">
        <title>Identification of a novel homeobox-containing gene, LAGY, which is downregulated in lung cancer.</title>
        <authorList>
            <person name="Chen Y."/>
            <person name="Petersen S."/>
            <person name="Pacyna-Gengelbach M."/>
            <person name="Pietas A."/>
            <person name="Petersen I."/>
        </authorList>
    </citation>
    <scope>NUCLEOTIDE SEQUENCE [MRNA] (ISOFORM 1)</scope>
    <scope>TISSUE SPECIFICITY</scope>
    <scope>POSSIBLE INVOLVEMENT IN LUNG CANCER</scope>
</reference>
<reference key="4">
    <citation type="journal article" date="2004" name="Nat. Genet.">
        <title>Complete sequencing and characterization of 21,243 full-length human cDNAs.</title>
        <authorList>
            <person name="Ota T."/>
            <person name="Suzuki Y."/>
            <person name="Nishikawa T."/>
            <person name="Otsuki T."/>
            <person name="Sugiyama T."/>
            <person name="Irie R."/>
            <person name="Wakamatsu A."/>
            <person name="Hayashi K."/>
            <person name="Sato H."/>
            <person name="Nagai K."/>
            <person name="Kimura K."/>
            <person name="Makita H."/>
            <person name="Sekine M."/>
            <person name="Obayashi M."/>
            <person name="Nishi T."/>
            <person name="Shibahara T."/>
            <person name="Tanaka T."/>
            <person name="Ishii S."/>
            <person name="Yamamoto J."/>
            <person name="Saito K."/>
            <person name="Kawai Y."/>
            <person name="Isono Y."/>
            <person name="Nakamura Y."/>
            <person name="Nagahari K."/>
            <person name="Murakami K."/>
            <person name="Yasuda T."/>
            <person name="Iwayanagi T."/>
            <person name="Wagatsuma M."/>
            <person name="Shiratori A."/>
            <person name="Sudo H."/>
            <person name="Hosoiri T."/>
            <person name="Kaku Y."/>
            <person name="Kodaira H."/>
            <person name="Kondo H."/>
            <person name="Sugawara M."/>
            <person name="Takahashi M."/>
            <person name="Kanda K."/>
            <person name="Yokoi T."/>
            <person name="Furuya T."/>
            <person name="Kikkawa E."/>
            <person name="Omura Y."/>
            <person name="Abe K."/>
            <person name="Kamihara K."/>
            <person name="Katsuta N."/>
            <person name="Sato K."/>
            <person name="Tanikawa M."/>
            <person name="Yamazaki M."/>
            <person name="Ninomiya K."/>
            <person name="Ishibashi T."/>
            <person name="Yamashita H."/>
            <person name="Murakawa K."/>
            <person name="Fujimori K."/>
            <person name="Tanai H."/>
            <person name="Kimata M."/>
            <person name="Watanabe M."/>
            <person name="Hiraoka S."/>
            <person name="Chiba Y."/>
            <person name="Ishida S."/>
            <person name="Ono Y."/>
            <person name="Takiguchi S."/>
            <person name="Watanabe S."/>
            <person name="Yosida M."/>
            <person name="Hotuta T."/>
            <person name="Kusano J."/>
            <person name="Kanehori K."/>
            <person name="Takahashi-Fujii A."/>
            <person name="Hara H."/>
            <person name="Tanase T.-O."/>
            <person name="Nomura Y."/>
            <person name="Togiya S."/>
            <person name="Komai F."/>
            <person name="Hara R."/>
            <person name="Takeuchi K."/>
            <person name="Arita M."/>
            <person name="Imose N."/>
            <person name="Musashino K."/>
            <person name="Yuuki H."/>
            <person name="Oshima A."/>
            <person name="Sasaki N."/>
            <person name="Aotsuka S."/>
            <person name="Yoshikawa Y."/>
            <person name="Matsunawa H."/>
            <person name="Ichihara T."/>
            <person name="Shiohata N."/>
            <person name="Sano S."/>
            <person name="Moriya S."/>
            <person name="Momiyama H."/>
            <person name="Satoh N."/>
            <person name="Takami S."/>
            <person name="Terashima Y."/>
            <person name="Suzuki O."/>
            <person name="Nakagawa S."/>
            <person name="Senoh A."/>
            <person name="Mizoguchi H."/>
            <person name="Goto Y."/>
            <person name="Shimizu F."/>
            <person name="Wakebe H."/>
            <person name="Hishigaki H."/>
            <person name="Watanabe T."/>
            <person name="Sugiyama A."/>
            <person name="Takemoto M."/>
            <person name="Kawakami B."/>
            <person name="Yamazaki M."/>
            <person name="Watanabe K."/>
            <person name="Kumagai A."/>
            <person name="Itakura S."/>
            <person name="Fukuzumi Y."/>
            <person name="Fujimori Y."/>
            <person name="Komiyama M."/>
            <person name="Tashiro H."/>
            <person name="Tanigami A."/>
            <person name="Fujiwara T."/>
            <person name="Ono T."/>
            <person name="Yamada K."/>
            <person name="Fujii Y."/>
            <person name="Ozaki K."/>
            <person name="Hirao M."/>
            <person name="Ohmori Y."/>
            <person name="Kawabata A."/>
            <person name="Hikiji T."/>
            <person name="Kobatake N."/>
            <person name="Inagaki H."/>
            <person name="Ikema Y."/>
            <person name="Okamoto S."/>
            <person name="Okitani R."/>
            <person name="Kawakami T."/>
            <person name="Noguchi S."/>
            <person name="Itoh T."/>
            <person name="Shigeta K."/>
            <person name="Senba T."/>
            <person name="Matsumura K."/>
            <person name="Nakajima Y."/>
            <person name="Mizuno T."/>
            <person name="Morinaga M."/>
            <person name="Sasaki M."/>
            <person name="Togashi T."/>
            <person name="Oyama M."/>
            <person name="Hata H."/>
            <person name="Watanabe M."/>
            <person name="Komatsu T."/>
            <person name="Mizushima-Sugano J."/>
            <person name="Satoh T."/>
            <person name="Shirai Y."/>
            <person name="Takahashi Y."/>
            <person name="Nakagawa K."/>
            <person name="Okumura K."/>
            <person name="Nagase T."/>
            <person name="Nomura N."/>
            <person name="Kikuchi H."/>
            <person name="Masuho Y."/>
            <person name="Yamashita R."/>
            <person name="Nakai K."/>
            <person name="Yada T."/>
            <person name="Nakamura Y."/>
            <person name="Ohara O."/>
            <person name="Isogai T."/>
            <person name="Sugano S."/>
        </authorList>
    </citation>
    <scope>NUCLEOTIDE SEQUENCE [LARGE SCALE MRNA] (ISOFORM 1)</scope>
    <source>
        <tissue>Brain</tissue>
    </source>
</reference>
<reference key="5">
    <citation type="journal article" date="2005" name="Nature">
        <title>Generation and annotation of the DNA sequences of human chromosomes 2 and 4.</title>
        <authorList>
            <person name="Hillier L.W."/>
            <person name="Graves T.A."/>
            <person name="Fulton R.S."/>
            <person name="Fulton L.A."/>
            <person name="Pepin K.H."/>
            <person name="Minx P."/>
            <person name="Wagner-McPherson C."/>
            <person name="Layman D."/>
            <person name="Wylie K."/>
            <person name="Sekhon M."/>
            <person name="Becker M.C."/>
            <person name="Fewell G.A."/>
            <person name="Delehaunty K.D."/>
            <person name="Miner T.L."/>
            <person name="Nash W.E."/>
            <person name="Kremitzki C."/>
            <person name="Oddy L."/>
            <person name="Du H."/>
            <person name="Sun H."/>
            <person name="Bradshaw-Cordum H."/>
            <person name="Ali J."/>
            <person name="Carter J."/>
            <person name="Cordes M."/>
            <person name="Harris A."/>
            <person name="Isak A."/>
            <person name="van Brunt A."/>
            <person name="Nguyen C."/>
            <person name="Du F."/>
            <person name="Courtney L."/>
            <person name="Kalicki J."/>
            <person name="Ozersky P."/>
            <person name="Abbott S."/>
            <person name="Armstrong J."/>
            <person name="Belter E.A."/>
            <person name="Caruso L."/>
            <person name="Cedroni M."/>
            <person name="Cotton M."/>
            <person name="Davidson T."/>
            <person name="Desai A."/>
            <person name="Elliott G."/>
            <person name="Erb T."/>
            <person name="Fronick C."/>
            <person name="Gaige T."/>
            <person name="Haakenson W."/>
            <person name="Haglund K."/>
            <person name="Holmes A."/>
            <person name="Harkins R."/>
            <person name="Kim K."/>
            <person name="Kruchowski S.S."/>
            <person name="Strong C.M."/>
            <person name="Grewal N."/>
            <person name="Goyea E."/>
            <person name="Hou S."/>
            <person name="Levy A."/>
            <person name="Martinka S."/>
            <person name="Mead K."/>
            <person name="McLellan M.D."/>
            <person name="Meyer R."/>
            <person name="Randall-Maher J."/>
            <person name="Tomlinson C."/>
            <person name="Dauphin-Kohlberg S."/>
            <person name="Kozlowicz-Reilly A."/>
            <person name="Shah N."/>
            <person name="Swearengen-Shahid S."/>
            <person name="Snider J."/>
            <person name="Strong J.T."/>
            <person name="Thompson J."/>
            <person name="Yoakum M."/>
            <person name="Leonard S."/>
            <person name="Pearman C."/>
            <person name="Trani L."/>
            <person name="Radionenko M."/>
            <person name="Waligorski J.E."/>
            <person name="Wang C."/>
            <person name="Rock S.M."/>
            <person name="Tin-Wollam A.-M."/>
            <person name="Maupin R."/>
            <person name="Latreille P."/>
            <person name="Wendl M.C."/>
            <person name="Yang S.-P."/>
            <person name="Pohl C."/>
            <person name="Wallis J.W."/>
            <person name="Spieth J."/>
            <person name="Bieri T.A."/>
            <person name="Berkowicz N."/>
            <person name="Nelson J.O."/>
            <person name="Osborne J."/>
            <person name="Ding L."/>
            <person name="Meyer R."/>
            <person name="Sabo A."/>
            <person name="Shotland Y."/>
            <person name="Sinha P."/>
            <person name="Wohldmann P.E."/>
            <person name="Cook L.L."/>
            <person name="Hickenbotham M.T."/>
            <person name="Eldred J."/>
            <person name="Williams D."/>
            <person name="Jones T.A."/>
            <person name="She X."/>
            <person name="Ciccarelli F.D."/>
            <person name="Izaurralde E."/>
            <person name="Taylor J."/>
            <person name="Schmutz J."/>
            <person name="Myers R.M."/>
            <person name="Cox D.R."/>
            <person name="Huang X."/>
            <person name="McPherson J.D."/>
            <person name="Mardis E.R."/>
            <person name="Clifton S.W."/>
            <person name="Warren W.C."/>
            <person name="Chinwalla A.T."/>
            <person name="Eddy S.R."/>
            <person name="Marra M.A."/>
            <person name="Ovcharenko I."/>
            <person name="Furey T.S."/>
            <person name="Miller W."/>
            <person name="Eichler E.E."/>
            <person name="Bork P."/>
            <person name="Suyama M."/>
            <person name="Torrents D."/>
            <person name="Waterston R.H."/>
            <person name="Wilson R.K."/>
        </authorList>
    </citation>
    <scope>NUCLEOTIDE SEQUENCE [LARGE SCALE GENOMIC DNA]</scope>
</reference>
<reference key="6">
    <citation type="journal article" date="2004" name="Genome Res.">
        <title>The status, quality, and expansion of the NIH full-length cDNA project: the Mammalian Gene Collection (MGC).</title>
        <authorList>
            <consortium name="The MGC Project Team"/>
        </authorList>
    </citation>
    <scope>NUCLEOTIDE SEQUENCE [LARGE SCALE MRNA] (ISOFORM 1)</scope>
    <source>
        <tissue>B-cell</tissue>
    </source>
</reference>
<reference key="7">
    <citation type="journal article" date="2004" name="Br. J. Cancer">
        <title>Loss of HOP tumour suppressor expression in head and neck squamous cell carcinoma.</title>
        <authorList>
            <person name="Lemaire F."/>
            <person name="Millon R."/>
            <person name="Muller D."/>
            <person name="Rabouel Y."/>
            <person name="Bracco L."/>
            <person name="Abecassis J."/>
            <person name="Wasylyk B."/>
        </authorList>
    </citation>
    <scope>INVOLVEMENT IN HEAD AND NECK SQUAMOUS CELL CARCINOMA</scope>
</reference>
<reference key="8">
    <citation type="journal article" date="2004" name="Cancer Genet. Cytogenet.">
        <title>Association between gene expression profile and tumor invasion in oral squamous cell carcinoma.</title>
        <authorList>
            <person name="Toruner G.A."/>
            <person name="Ulger C."/>
            <person name="Alkan M."/>
            <person name="Galante A.T."/>
            <person name="Rinaggio J."/>
            <person name="Wilk R."/>
            <person name="Tian B."/>
            <person name="Soteropoulos P."/>
            <person name="Hameed M.R."/>
            <person name="Schwalb M.N."/>
            <person name="Dermody J.J."/>
        </authorList>
    </citation>
    <scope>INVOLVEMENT IN ORAL SQUAMOUS CELL CARCINOMA</scope>
</reference>
<reference key="9">
    <citation type="journal article" date="2016" name="Nat. Commun.">
        <title>ARD1-mediated Hsp70 acetylation balances stress-induced protein refolding and degradation.</title>
        <authorList>
            <person name="Seo J.H."/>
            <person name="Park J.H."/>
            <person name="Lee E.J."/>
            <person name="Vo T.T."/>
            <person name="Choi H."/>
            <person name="Kim J.Y."/>
            <person name="Jang J.K."/>
            <person name="Wee H.J."/>
            <person name="Lee H.S."/>
            <person name="Jang S.H."/>
            <person name="Park Z.Y."/>
            <person name="Jeong J."/>
            <person name="Lee K.J."/>
            <person name="Seok S.H."/>
            <person name="Park J.Y."/>
            <person name="Lee B.J."/>
            <person name="Lee M.N."/>
            <person name="Oh G.T."/>
            <person name="Kim K.W."/>
        </authorList>
    </citation>
    <scope>FUNCTION</scope>
    <scope>INTERACTION WITH HSPA1A; HSPA1B AND HSPA8</scope>
</reference>
<evidence type="ECO:0000250" key="1">
    <source>
        <dbReference type="UniProtKB" id="Q8R1H0"/>
    </source>
</evidence>
<evidence type="ECO:0000255" key="2">
    <source>
        <dbReference type="PROSITE-ProRule" id="PRU00108"/>
    </source>
</evidence>
<evidence type="ECO:0000269" key="3">
    <source>
    </source>
</evidence>
<evidence type="ECO:0000269" key="4">
    <source>
    </source>
</evidence>
<evidence type="ECO:0000269" key="5">
    <source>
    </source>
</evidence>
<evidence type="ECO:0000303" key="6">
    <source>
    </source>
</evidence>
<evidence type="ECO:0000305" key="7"/>
<keyword id="KW-0025">Alternative splicing</keyword>
<keyword id="KW-0963">Cytoplasm</keyword>
<keyword id="KW-0217">Developmental protein</keyword>
<keyword id="KW-0371">Homeobox</keyword>
<keyword id="KW-0539">Nucleus</keyword>
<keyword id="KW-1267">Proteomics identification</keyword>
<keyword id="KW-0656">Proto-oncogene</keyword>
<keyword id="KW-1185">Reference proteome</keyword>
<keyword id="KW-0678">Repressor</keyword>
<keyword id="KW-0804">Transcription</keyword>
<keyword id="KW-0805">Transcription regulation</keyword>
<feature type="chain" id="PRO_0000049129" description="Homeodomain-only protein">
    <location>
        <begin position="1"/>
        <end position="73"/>
    </location>
</feature>
<feature type="DNA-binding region" description="Homeobox; degenerate" evidence="2">
    <location>
        <begin position="3"/>
        <end position="62"/>
    </location>
</feature>
<feature type="splice variant" id="VSP_047290" description="In isoform 3 and isoform 4." evidence="7">
    <original>M</original>
    <variation>MLIFLGCYRRRLEERAGTM</variation>
    <location>
        <position position="1"/>
    </location>
</feature>
<feature type="splice variant" id="VSP_012659" description="In isoform 2 and isoform 4." evidence="6">
    <original>KWFKQRLAKWRRSEGLPSECRSVTD</original>
    <variation>GSDLISRSKIWHPESSPQREGYPHDSLPCLAFDYFSLLPPQCKEMV</variation>
    <location>
        <begin position="49"/>
        <end position="73"/>
    </location>
</feature>
<feature type="sequence conflict" description="In Ref. 6; AAH14225." evidence="7" ref="6">
    <original>T</original>
    <variation>I</variation>
    <location>
        <position position="72"/>
    </location>
</feature>
<feature type="sequence conflict" description="In Ref. 1; AAM46830/AAM46831." evidence="7" ref="1">
    <original>P</original>
    <variation>L</variation>
    <location sequence="Q9BPY8-2">
        <position position="76"/>
    </location>
</feature>
<accession>Q9BPY8</accession>
<accession>A8K0Z2</accession>
<accession>E9PB55</accession>
<accession>G3V294</accession>
<accession>Q8N0V6</accession>
<accession>Q96CI1</accession>
<sequence>MSAETASGPTEDQVEILEYNFNKVDKHPDSTTLCLIAAEAGLSEEETQKWFKQRLAKWRRSEGLPSECRSVTD</sequence>
<organism>
    <name type="scientific">Homo sapiens</name>
    <name type="common">Human</name>
    <dbReference type="NCBI Taxonomy" id="9606"/>
    <lineage>
        <taxon>Eukaryota</taxon>
        <taxon>Metazoa</taxon>
        <taxon>Chordata</taxon>
        <taxon>Craniata</taxon>
        <taxon>Vertebrata</taxon>
        <taxon>Euteleostomi</taxon>
        <taxon>Mammalia</taxon>
        <taxon>Eutheria</taxon>
        <taxon>Euarchontoglires</taxon>
        <taxon>Primates</taxon>
        <taxon>Haplorrhini</taxon>
        <taxon>Catarrhini</taxon>
        <taxon>Hominidae</taxon>
        <taxon>Homo</taxon>
    </lineage>
</organism>
<comment type="function">
    <text evidence="1 5">Atypical homeodomain protein which does not bind DNA and is required to modulate cardiac growth and development. Acts via its interaction with SRF, thereby modulating the expression of SRF-dependent cardiac-specific genes and cardiac development. Prevents SRF-dependent transcription either by inhibiting SRF binding to DNA or by recruiting histone deacetylase (HDAC) proteins that prevent transcription by SRF. Overexpression causes cardiac hypertrophy (By similarity). May act as a tumor suppressor. Acts as a co-chaperone for HSPA1A and HSPA1B chaperone proteins and assists in chaperone-mediated protein refolding (PubMed:27708256).</text>
</comment>
<comment type="subunit">
    <text evidence="1 5">Interacts with serum response factor (SRF). Component of a large complex containing histone deacetylases such as HDAC2 (By similarity). Interacts with the acetylated forms of HSPA1A and HSPA1B. Interacts with HSPA8 (PubMed:27708256).</text>
</comment>
<comment type="interaction">
    <interactant intactId="EBI-10295883">
        <id>Q9BPY8</id>
    </interactant>
    <interactant intactId="EBI-79165">
        <id>Q9NRD5</id>
        <label>PICK1</label>
    </interactant>
    <organismsDiffer>false</organismsDiffer>
    <experiments>3</experiments>
</comment>
<comment type="interaction">
    <interactant intactId="EBI-10295883">
        <id>Q9BPY8</id>
    </interactant>
    <interactant intactId="EBI-722877">
        <id>Q99081</id>
        <label>TCF12</label>
    </interactant>
    <organismsDiffer>false</organismsDiffer>
    <experiments>3</experiments>
</comment>
<comment type="subcellular location">
    <subcellularLocation>
        <location evidence="1">Nucleus</location>
    </subcellularLocation>
    <subcellularLocation>
        <location evidence="1">Cytoplasm</location>
    </subcellularLocation>
</comment>
<comment type="alternative products">
    <event type="alternative splicing"/>
    <isoform>
        <id>Q9BPY8-1</id>
        <name>1</name>
        <name>A</name>
        <sequence type="displayed"/>
    </isoform>
    <isoform>
        <id>Q9BPY8-2</id>
        <name>2</name>
        <name>B</name>
        <sequence type="described" ref="VSP_012659"/>
    </isoform>
    <isoform>
        <id>Q9BPY8-3</id>
        <name>3</name>
        <sequence type="described" ref="VSP_047290"/>
    </isoform>
    <isoform>
        <id>Q9BPY8-4</id>
        <name>4</name>
        <sequence type="described" ref="VSP_047290 VSP_012659"/>
    </isoform>
</comment>
<comment type="tissue specificity">
    <text evidence="3 4">Widely expressed. Expressed in the heart, brain, placenta, lung, skeletal and smooth muscles, uterus, urinary bladder, kidney and spleen. Down-regulated in some types of cancer such as lung cancer, choriocarcinoma, head and neck squamous cell carcinoma and oral squamous cell carcinoma.</text>
</comment>
<name>HOP_HUMAN</name>
<protein>
    <recommendedName>
        <fullName>Homeodomain-only protein</fullName>
    </recommendedName>
    <alternativeName>
        <fullName>Lung cancer-associated Y protein</fullName>
    </alternativeName>
    <alternativeName>
        <fullName>Not expressed in choriocarcinoma protein 1</fullName>
    </alternativeName>
    <alternativeName>
        <fullName>Odd homeobox protein 1</fullName>
    </alternativeName>
</protein>